<gene>
    <name type="primary">comR</name>
    <name type="synonym">ycfQ</name>
    <name type="ordered locus">b1111</name>
    <name type="ordered locus">JW5159</name>
</gene>
<proteinExistence type="evidence at protein level"/>
<protein>
    <recommendedName>
        <fullName>HTH-type transcriptional repressor ComR</fullName>
    </recommendedName>
    <alternativeName>
        <fullName>Copper outer membrane regulator</fullName>
    </alternativeName>
</protein>
<organism>
    <name type="scientific">Escherichia coli (strain K12)</name>
    <dbReference type="NCBI Taxonomy" id="83333"/>
    <lineage>
        <taxon>Bacteria</taxon>
        <taxon>Pseudomonadati</taxon>
        <taxon>Pseudomonadota</taxon>
        <taxon>Gammaproteobacteria</taxon>
        <taxon>Enterobacterales</taxon>
        <taxon>Enterobacteriaceae</taxon>
        <taxon>Escherichia</taxon>
    </lineage>
</organism>
<sequence length="210" mass="23362">MATDSTQCVKKSRGRPKVFDRDAALDKAMKLFWQHGYEATSLADLVEATGAKAPTLYAEFTNKEGLFRAVLDRYIDRFAAKHEAQLFCEEKSVESALADYFAAIANCFTSKDTPAGCFMINNCTTLSPDSGDIANTLKSRHAMQERTLQQFLCQRQARGEIPPHCDVTHLAEFLNCIIQGMSISAREGASLEKLMQIAGTTLRLWPELVK</sequence>
<evidence type="ECO:0000255" key="1">
    <source>
        <dbReference type="PROSITE-ProRule" id="PRU00335"/>
    </source>
</evidence>
<evidence type="ECO:0000269" key="2">
    <source>
    </source>
</evidence>
<name>COMR_ECOLI</name>
<accession>P75952</accession>
<accession>Q9R7N8</accession>
<accession>Q9R7N9</accession>
<comment type="function">
    <text evidence="2">Represses expression of BhsA/ComC by binding to its promoter region in the absence of copper.</text>
</comment>
<comment type="activity regulation">
    <text evidence="2">Binding to the promoter region of BhsA/ComC is released in the presence of copper.</text>
</comment>
<comment type="disruption phenotype">
    <text evidence="2">Deletion mutants contain lower cytoplasmic copper levels compared to the wild-type strain when exposed to copper.</text>
</comment>
<keyword id="KW-0186">Copper</keyword>
<keyword id="KW-0238">DNA-binding</keyword>
<keyword id="KW-1185">Reference proteome</keyword>
<keyword id="KW-0678">Repressor</keyword>
<keyword id="KW-0804">Transcription</keyword>
<keyword id="KW-0805">Transcription regulation</keyword>
<feature type="chain" id="PRO_0000070638" description="HTH-type transcriptional repressor ComR">
    <location>
        <begin position="1"/>
        <end position="210"/>
    </location>
</feature>
<feature type="domain" description="HTH tetR-type" evidence="1">
    <location>
        <begin position="18"/>
        <end position="78"/>
    </location>
</feature>
<feature type="DNA-binding region" description="H-T-H motif" evidence="1">
    <location>
        <begin position="41"/>
        <end position="60"/>
    </location>
</feature>
<reference key="1">
    <citation type="journal article" date="1996" name="DNA Res.">
        <title>A 718-kb DNA sequence of the Escherichia coli K-12 genome corresponding to the 12.7-28.0 min region on the linkage map.</title>
        <authorList>
            <person name="Oshima T."/>
            <person name="Aiba H."/>
            <person name="Baba T."/>
            <person name="Fujita K."/>
            <person name="Hayashi K."/>
            <person name="Honjo A."/>
            <person name="Ikemoto K."/>
            <person name="Inada T."/>
            <person name="Itoh T."/>
            <person name="Kajihara M."/>
            <person name="Kanai K."/>
            <person name="Kashimoto K."/>
            <person name="Kimura S."/>
            <person name="Kitagawa M."/>
            <person name="Makino K."/>
            <person name="Masuda S."/>
            <person name="Miki T."/>
            <person name="Mizobuchi K."/>
            <person name="Mori H."/>
            <person name="Motomura K."/>
            <person name="Nakamura Y."/>
            <person name="Nashimoto H."/>
            <person name="Nishio Y."/>
            <person name="Saito N."/>
            <person name="Sampei G."/>
            <person name="Seki Y."/>
            <person name="Tagami H."/>
            <person name="Takemoto K."/>
            <person name="Wada C."/>
            <person name="Yamamoto Y."/>
            <person name="Yano M."/>
            <person name="Horiuchi T."/>
        </authorList>
    </citation>
    <scope>NUCLEOTIDE SEQUENCE [LARGE SCALE GENOMIC DNA]</scope>
    <source>
        <strain>K12 / W3110 / ATCC 27325 / DSM 5911</strain>
    </source>
</reference>
<reference key="2">
    <citation type="journal article" date="1997" name="Science">
        <title>The complete genome sequence of Escherichia coli K-12.</title>
        <authorList>
            <person name="Blattner F.R."/>
            <person name="Plunkett G. III"/>
            <person name="Bloch C.A."/>
            <person name="Perna N.T."/>
            <person name="Burland V."/>
            <person name="Riley M."/>
            <person name="Collado-Vides J."/>
            <person name="Glasner J.D."/>
            <person name="Rode C.K."/>
            <person name="Mayhew G.F."/>
            <person name="Gregor J."/>
            <person name="Davis N.W."/>
            <person name="Kirkpatrick H.A."/>
            <person name="Goeden M.A."/>
            <person name="Rose D.J."/>
            <person name="Mau B."/>
            <person name="Shao Y."/>
        </authorList>
    </citation>
    <scope>NUCLEOTIDE SEQUENCE [LARGE SCALE GENOMIC DNA]</scope>
    <source>
        <strain>K12 / MG1655 / ATCC 47076</strain>
    </source>
</reference>
<reference key="3">
    <citation type="journal article" date="2006" name="Mol. Syst. Biol.">
        <title>Highly accurate genome sequences of Escherichia coli K-12 strains MG1655 and W3110.</title>
        <authorList>
            <person name="Hayashi K."/>
            <person name="Morooka N."/>
            <person name="Yamamoto Y."/>
            <person name="Fujita K."/>
            <person name="Isono K."/>
            <person name="Choi S."/>
            <person name="Ohtsubo E."/>
            <person name="Baba T."/>
            <person name="Wanner B.L."/>
            <person name="Mori H."/>
            <person name="Horiuchi T."/>
        </authorList>
    </citation>
    <scope>NUCLEOTIDE SEQUENCE [LARGE SCALE GENOMIC DNA]</scope>
    <source>
        <strain>K12 / W3110 / ATCC 27325 / DSM 5911</strain>
    </source>
</reference>
<reference key="4">
    <citation type="journal article" date="2012" name="BioMetals">
        <title>The copper-inducible ComR (YcfQ) repressor regulates expression of ComC (YcfR), which affects copper permeability of the outer membrane of Escherichia coli.</title>
        <authorList>
            <person name="Mermod M."/>
            <person name="Magnani D."/>
            <person name="Solioz M."/>
            <person name="Stoyanov J.V."/>
        </authorList>
    </citation>
    <scope>FUNCTION</scope>
    <scope>DNA-BINDING</scope>
    <scope>ACTIVITY REGULATION</scope>
    <scope>DISRUPTION PHENOTYPE</scope>
    <scope>GENE NAME</scope>
</reference>
<dbReference type="EMBL" id="U00096">
    <property type="protein sequence ID" value="AAC74195.2"/>
    <property type="molecule type" value="Genomic_DNA"/>
</dbReference>
<dbReference type="EMBL" id="AP009048">
    <property type="protein sequence ID" value="BAA35926.2"/>
    <property type="molecule type" value="Genomic_DNA"/>
</dbReference>
<dbReference type="RefSeq" id="NP_415629.4">
    <property type="nucleotide sequence ID" value="NC_000913.3"/>
</dbReference>
<dbReference type="RefSeq" id="WP_001336528.1">
    <property type="nucleotide sequence ID" value="NZ_SSZK01000019.1"/>
</dbReference>
<dbReference type="SMR" id="P75952"/>
<dbReference type="BioGRID" id="4260995">
    <property type="interactions" value="107"/>
</dbReference>
<dbReference type="FunCoup" id="P75952">
    <property type="interactions" value="60"/>
</dbReference>
<dbReference type="STRING" id="511145.b1111"/>
<dbReference type="jPOST" id="P75952"/>
<dbReference type="PaxDb" id="511145-b1111"/>
<dbReference type="EnsemblBacteria" id="AAC74195">
    <property type="protein sequence ID" value="AAC74195"/>
    <property type="gene ID" value="b1111"/>
</dbReference>
<dbReference type="GeneID" id="947425"/>
<dbReference type="KEGG" id="ecj:JW5159"/>
<dbReference type="KEGG" id="eco:b1111"/>
<dbReference type="KEGG" id="ecoc:C3026_06700"/>
<dbReference type="PATRIC" id="fig|511145.12.peg.1155"/>
<dbReference type="EchoBASE" id="EB3209"/>
<dbReference type="eggNOG" id="COG1309">
    <property type="taxonomic scope" value="Bacteria"/>
</dbReference>
<dbReference type="HOGENOM" id="CLU_069356_28_0_6"/>
<dbReference type="InParanoid" id="P75952"/>
<dbReference type="OMA" id="IQGMSQQ"/>
<dbReference type="OrthoDB" id="270177at2"/>
<dbReference type="PhylomeDB" id="P75952"/>
<dbReference type="BioCyc" id="EcoCyc:G6569-MONOMER"/>
<dbReference type="PRO" id="PR:P75952"/>
<dbReference type="Proteomes" id="UP000000625">
    <property type="component" value="Chromosome"/>
</dbReference>
<dbReference type="GO" id="GO:0003677">
    <property type="term" value="F:DNA binding"/>
    <property type="evidence" value="ECO:0000314"/>
    <property type="project" value="EcoCyc"/>
</dbReference>
<dbReference type="GO" id="GO:0003700">
    <property type="term" value="F:DNA-binding transcription factor activity"/>
    <property type="evidence" value="ECO:0000318"/>
    <property type="project" value="GO_Central"/>
</dbReference>
<dbReference type="GO" id="GO:0000976">
    <property type="term" value="F:transcription cis-regulatory region binding"/>
    <property type="evidence" value="ECO:0000318"/>
    <property type="project" value="GO_Central"/>
</dbReference>
<dbReference type="GO" id="GO:0045892">
    <property type="term" value="P:negative regulation of DNA-templated transcription"/>
    <property type="evidence" value="ECO:0000270"/>
    <property type="project" value="EcoCyc"/>
</dbReference>
<dbReference type="GO" id="GO:0006355">
    <property type="term" value="P:regulation of DNA-templated transcription"/>
    <property type="evidence" value="ECO:0000318"/>
    <property type="project" value="GO_Central"/>
</dbReference>
<dbReference type="GO" id="GO:0046688">
    <property type="term" value="P:response to copper ion"/>
    <property type="evidence" value="ECO:0000314"/>
    <property type="project" value="EcoCyc"/>
</dbReference>
<dbReference type="FunFam" id="1.10.10.60:FF:000183">
    <property type="entry name" value="Transcriptional regulator, TetR family"/>
    <property type="match status" value="1"/>
</dbReference>
<dbReference type="Gene3D" id="1.10.10.60">
    <property type="entry name" value="Homeodomain-like"/>
    <property type="match status" value="1"/>
</dbReference>
<dbReference type="Gene3D" id="1.10.357.10">
    <property type="entry name" value="Tetracycline Repressor, domain 2"/>
    <property type="match status" value="1"/>
</dbReference>
<dbReference type="InterPro" id="IPR009057">
    <property type="entry name" value="Homeodomain-like_sf"/>
</dbReference>
<dbReference type="InterPro" id="IPR001647">
    <property type="entry name" value="HTH_TetR"/>
</dbReference>
<dbReference type="InterPro" id="IPR036271">
    <property type="entry name" value="Tet_transcr_reg_TetR-rel_C_sf"/>
</dbReference>
<dbReference type="InterPro" id="IPR011075">
    <property type="entry name" value="TetR_C"/>
</dbReference>
<dbReference type="PANTHER" id="PTHR47506:SF1">
    <property type="entry name" value="HTH-TYPE TRANSCRIPTIONAL REGULATOR YJDC"/>
    <property type="match status" value="1"/>
</dbReference>
<dbReference type="PANTHER" id="PTHR47506">
    <property type="entry name" value="TRANSCRIPTIONAL REGULATORY PROTEIN"/>
    <property type="match status" value="1"/>
</dbReference>
<dbReference type="Pfam" id="PF16925">
    <property type="entry name" value="TetR_C_13"/>
    <property type="match status" value="1"/>
</dbReference>
<dbReference type="Pfam" id="PF00440">
    <property type="entry name" value="TetR_N"/>
    <property type="match status" value="1"/>
</dbReference>
<dbReference type="PRINTS" id="PR00455">
    <property type="entry name" value="HTHTETR"/>
</dbReference>
<dbReference type="SUPFAM" id="SSF46689">
    <property type="entry name" value="Homeodomain-like"/>
    <property type="match status" value="1"/>
</dbReference>
<dbReference type="SUPFAM" id="SSF48498">
    <property type="entry name" value="Tetracyclin repressor-like, C-terminal domain"/>
    <property type="match status" value="1"/>
</dbReference>
<dbReference type="PROSITE" id="PS50977">
    <property type="entry name" value="HTH_TETR_2"/>
    <property type="match status" value="1"/>
</dbReference>